<evidence type="ECO:0000250" key="1"/>
<evidence type="ECO:0000255" key="2"/>
<evidence type="ECO:0000256" key="3">
    <source>
        <dbReference type="SAM" id="MobiDB-lite"/>
    </source>
</evidence>
<name>CEP70_RAT</name>
<keyword id="KW-0175">Coiled coil</keyword>
<keyword id="KW-0963">Cytoplasm</keyword>
<keyword id="KW-0206">Cytoskeleton</keyword>
<keyword id="KW-1185">Reference proteome</keyword>
<keyword id="KW-0802">TPR repeat</keyword>
<comment type="function">
    <text evidence="1">Plays a role in the organization of both preexisting and nascent microtubules in interphase cells. During mitosis, required for the organization and orientation of the mitotic spindle (By similarity).</text>
</comment>
<comment type="subunit">
    <text evidence="1">Directly interacts with tubulin-gamma; this interaction determines centrosomal localization.</text>
</comment>
<comment type="subcellular location">
    <subcellularLocation>
        <location evidence="1">Cytoplasm</location>
        <location evidence="1">Cytoskeleton</location>
        <location evidence="1">Microtubule organizing center</location>
        <location evidence="1">Centrosome</location>
    </subcellularLocation>
</comment>
<comment type="domain">
    <text evidence="1">The coiled-coil domains may be important for tubulin-gamma-binding and hence for centrosomal localization.</text>
</comment>
<organism>
    <name type="scientific">Rattus norvegicus</name>
    <name type="common">Rat</name>
    <dbReference type="NCBI Taxonomy" id="10116"/>
    <lineage>
        <taxon>Eukaryota</taxon>
        <taxon>Metazoa</taxon>
        <taxon>Chordata</taxon>
        <taxon>Craniata</taxon>
        <taxon>Vertebrata</taxon>
        <taxon>Euteleostomi</taxon>
        <taxon>Mammalia</taxon>
        <taxon>Eutheria</taxon>
        <taxon>Euarchontoglires</taxon>
        <taxon>Glires</taxon>
        <taxon>Rodentia</taxon>
        <taxon>Myomorpha</taxon>
        <taxon>Muroidea</taxon>
        <taxon>Muridae</taxon>
        <taxon>Murinae</taxon>
        <taxon>Rattus</taxon>
    </lineage>
</organism>
<proteinExistence type="evidence at transcript level"/>
<feature type="chain" id="PRO_0000414857" description="Centrosomal protein of 70 kDa">
    <location>
        <begin position="1"/>
        <end position="598"/>
    </location>
</feature>
<feature type="repeat" description="TPR">
    <location>
        <begin position="484"/>
        <end position="517"/>
    </location>
</feature>
<feature type="region of interest" description="Disordered" evidence="3">
    <location>
        <begin position="16"/>
        <end position="43"/>
    </location>
</feature>
<feature type="coiled-coil region" evidence="2">
    <location>
        <begin position="99"/>
        <end position="210"/>
    </location>
</feature>
<feature type="coiled-coil region" evidence="2">
    <location>
        <begin position="255"/>
        <end position="317"/>
    </location>
</feature>
<feature type="compositionally biased region" description="Polar residues" evidence="3">
    <location>
        <begin position="16"/>
        <end position="38"/>
    </location>
</feature>
<protein>
    <recommendedName>
        <fullName>Centrosomal protein of 70 kDa</fullName>
        <shortName>Cep70</shortName>
    </recommendedName>
</protein>
<gene>
    <name type="primary">Cep70</name>
</gene>
<dbReference type="EMBL" id="BC087075">
    <property type="protein sequence ID" value="AAH87075.1"/>
    <property type="molecule type" value="mRNA"/>
</dbReference>
<dbReference type="RefSeq" id="NP_001017470.1">
    <property type="nucleotide sequence ID" value="NM_001017470.1"/>
</dbReference>
<dbReference type="RefSeq" id="NP_001415802.1">
    <property type="nucleotide sequence ID" value="NM_001428873.1"/>
</dbReference>
<dbReference type="RefSeq" id="XP_006243701.1">
    <property type="nucleotide sequence ID" value="XM_006243639.1"/>
</dbReference>
<dbReference type="RefSeq" id="XP_063121970.1">
    <property type="nucleotide sequence ID" value="XM_063265900.1"/>
</dbReference>
<dbReference type="RefSeq" id="XP_063121971.1">
    <property type="nucleotide sequence ID" value="XM_063265901.1"/>
</dbReference>
<dbReference type="SMR" id="Q5PQQ9"/>
<dbReference type="FunCoup" id="Q5PQQ9">
    <property type="interactions" value="819"/>
</dbReference>
<dbReference type="STRING" id="10116.ENSRNOP00000072786"/>
<dbReference type="PhosphoSitePlus" id="Q5PQQ9"/>
<dbReference type="PaxDb" id="10116-ENSRNOP00000053430"/>
<dbReference type="Ensembl" id="ENSRNOT00000056590.5">
    <property type="protein sequence ID" value="ENSRNOP00000053430.2"/>
    <property type="gene ID" value="ENSRNOG00000022845.7"/>
</dbReference>
<dbReference type="GeneID" id="367153"/>
<dbReference type="KEGG" id="rno:367153"/>
<dbReference type="UCSC" id="RGD:1561486">
    <property type="organism name" value="rat"/>
</dbReference>
<dbReference type="AGR" id="RGD:1561486"/>
<dbReference type="CTD" id="80321"/>
<dbReference type="RGD" id="1561486">
    <property type="gene designation" value="Cep70"/>
</dbReference>
<dbReference type="eggNOG" id="ENOG502QS45">
    <property type="taxonomic scope" value="Eukaryota"/>
</dbReference>
<dbReference type="GeneTree" id="ENSGT00390000009029"/>
<dbReference type="HOGENOM" id="CLU_032136_0_0_1"/>
<dbReference type="InParanoid" id="Q5PQQ9"/>
<dbReference type="PhylomeDB" id="Q5PQQ9"/>
<dbReference type="TreeFam" id="TF330986"/>
<dbReference type="Reactome" id="R-RNO-2565942">
    <property type="pathway name" value="Regulation of PLK1 Activity at G2/M Transition"/>
</dbReference>
<dbReference type="Reactome" id="R-RNO-380259">
    <property type="pathway name" value="Loss of Nlp from mitotic centrosomes"/>
</dbReference>
<dbReference type="Reactome" id="R-RNO-380270">
    <property type="pathway name" value="Recruitment of mitotic centrosome proteins and complexes"/>
</dbReference>
<dbReference type="Reactome" id="R-RNO-380284">
    <property type="pathway name" value="Loss of proteins required for interphase microtubule organization from the centrosome"/>
</dbReference>
<dbReference type="Reactome" id="R-RNO-380320">
    <property type="pathway name" value="Recruitment of NuMA to mitotic centrosomes"/>
</dbReference>
<dbReference type="Reactome" id="R-RNO-5620912">
    <property type="pathway name" value="Anchoring of the basal body to the plasma membrane"/>
</dbReference>
<dbReference type="Reactome" id="R-RNO-8854518">
    <property type="pathway name" value="AURKA Activation by TPX2"/>
</dbReference>
<dbReference type="PRO" id="PR:Q5PQQ9"/>
<dbReference type="Proteomes" id="UP000002494">
    <property type="component" value="Chromosome 8"/>
</dbReference>
<dbReference type="Bgee" id="ENSRNOG00000022845">
    <property type="expression patterns" value="Expressed in testis and 19 other cell types or tissues"/>
</dbReference>
<dbReference type="ExpressionAtlas" id="Q5PQQ9">
    <property type="expression patterns" value="baseline and differential"/>
</dbReference>
<dbReference type="GO" id="GO:0005813">
    <property type="term" value="C:centrosome"/>
    <property type="evidence" value="ECO:0000266"/>
    <property type="project" value="RGD"/>
</dbReference>
<dbReference type="GO" id="GO:0005737">
    <property type="term" value="C:cytoplasm"/>
    <property type="evidence" value="ECO:0007669"/>
    <property type="project" value="UniProtKB-KW"/>
</dbReference>
<dbReference type="GO" id="GO:0005815">
    <property type="term" value="C:microtubule organizing center"/>
    <property type="evidence" value="ECO:0000318"/>
    <property type="project" value="GO_Central"/>
</dbReference>
<dbReference type="GO" id="GO:0043015">
    <property type="term" value="F:gamma-tubulin binding"/>
    <property type="evidence" value="ECO:0007669"/>
    <property type="project" value="InterPro"/>
</dbReference>
<dbReference type="GO" id="GO:0042802">
    <property type="term" value="F:identical protein binding"/>
    <property type="evidence" value="ECO:0000266"/>
    <property type="project" value="RGD"/>
</dbReference>
<dbReference type="GO" id="GO:0060271">
    <property type="term" value="P:cilium assembly"/>
    <property type="evidence" value="ECO:0007669"/>
    <property type="project" value="InterPro"/>
</dbReference>
<dbReference type="GO" id="GO:0070507">
    <property type="term" value="P:regulation of microtubule cytoskeleton organization"/>
    <property type="evidence" value="ECO:0007669"/>
    <property type="project" value="InterPro"/>
</dbReference>
<dbReference type="InterPro" id="IPR037692">
    <property type="entry name" value="CEP70"/>
</dbReference>
<dbReference type="PANTHER" id="PTHR14594">
    <property type="entry name" value="CENTROSOMAL PROTEIN OF 70 KDA"/>
    <property type="match status" value="1"/>
</dbReference>
<dbReference type="PANTHER" id="PTHR14594:SF1">
    <property type="entry name" value="CENTROSOMAL PROTEIN OF 70 KDA"/>
    <property type="match status" value="1"/>
</dbReference>
<sequence>MTEGTQVFLLPISTSDSTKEPLSTVTSQAQDSSLSANRPVTEKQQEEAEWESISRLLVTRGFKPLCLVKGANLRDFIVFDKQSSQRMRQAFKTLMEETTRQQSMLQELIETNHQLKSELQLEQNRAAHQEQRANDLQQIMDSVKSKIGELEDESLNRVCQEQNRIKDLQKEYKTLQMKCQHYKKKQMEQEETIASLQKEIRRFAKEEEDRVITQKRLFTHLCRRVPHSVLDKQQCGEDDSQSEGKDYLNLGVSPTYKGLLTSLQKQLEKSNSKIDVLLGEKLNLQKDLENRPTEHELRLYKQQVKKLEKTLKKNIKLQDLIGQKKSDDMEKKDEPSKDIHQQALVDQRYFQVLCSIDSIVHSPRAPGVIYKQSKERAQNRSKDAVQECGFEHLVPVIEMWADELTSLKDLYKSLKILSAELIPWHNLKKPNENEGVKVGDLLLMVDTMLEEVENQKETSSMPNSQTLQAIVSHFQKLFDVQSLNGVYPRMNEVYARLGEMNNAVRNLQELLGLDSSSSLCMVVSTVGKLCKMINEDVSEQIKRVLGPEDLQSIINKLEEHEEFFPAFQAFTNDLLEILEIDDLDAIVPAVKKLKVLSY</sequence>
<accession>Q5PQQ9</accession>
<reference key="1">
    <citation type="journal article" date="2004" name="Genome Res.">
        <title>The status, quality, and expansion of the NIH full-length cDNA project: the Mammalian Gene Collection (MGC).</title>
        <authorList>
            <consortium name="The MGC Project Team"/>
        </authorList>
    </citation>
    <scope>NUCLEOTIDE SEQUENCE [LARGE SCALE MRNA]</scope>
    <source>
        <tissue>Testis</tissue>
    </source>
</reference>